<reference key="1">
    <citation type="submission" date="2001-10" db="EMBL/GenBank/DDBJ databases">
        <title>Structural and functional genomics of Bungarus candidus.</title>
        <authorList>
            <person name="Tsai I.H."/>
            <person name="Wang Y.M."/>
            <person name="Hsu H.Y."/>
        </authorList>
    </citation>
    <scope>NUCLEOTIDE SEQUENCE [MRNA]</scope>
    <source>
        <tissue>Venom gland</tissue>
    </source>
</reference>
<reference key="2">
    <citation type="journal article" date="2003" name="Toxicon">
        <title>Identification of alpha-bungarotoxin (A31) as the major postsynaptic neurotoxin, and complete nucleotide identity of a genomic DNA of Bungarus candidus from Java with exons of the Bungarus multicinctus alpha-bungarotoxin (A31) gene.</title>
        <authorList>
            <person name="Kuch U."/>
            <person name="Molles B.E."/>
            <person name="Omori-Satoh T."/>
            <person name="Chanhome L."/>
            <person name="Samejima Y."/>
            <person name="Mebs D."/>
        </authorList>
    </citation>
    <scope>NUCLEOTIDE SEQUENCE [GENOMIC DNA] OF 20-95</scope>
    <scope>PROTEIN SEQUENCE OF 22-61</scope>
    <scope>FUNCTION</scope>
    <scope>MASS SPECTROMETRY</scope>
    <scope>TOXIC DOSE</scope>
    <scope>SUBCELLULAR LOCATION</scope>
    <source>
        <tissue>Skin</tissue>
        <tissue>Venom</tissue>
    </source>
</reference>
<reference key="3">
    <citation type="journal article" date="2019" name="Biochem. J.">
        <title>Novel long-chain neurotoxins from Bungarus candidus distinguish the two binding sites in muscle-type nicotinic acetylcholine receptors.</title>
        <authorList>
            <person name="Utkin Y.N."/>
            <person name="Kuch U."/>
            <person name="Kasheverov I.E."/>
            <person name="Lebedev D.S."/>
            <person name="Cederlund E."/>
            <person name="Molles B.E."/>
            <person name="Polyak I."/>
            <person name="Ivanov I.A."/>
            <person name="Prokopev N.A."/>
            <person name="Ziganshin R.H."/>
            <person name="Jornvall H."/>
            <person name="Alvelius G."/>
            <person name="Chanhome L."/>
            <person name="Warrell D.A."/>
            <person name="Mebs D."/>
            <person name="Bergman T."/>
            <person name="Tsetlin V.I."/>
        </authorList>
    </citation>
    <scope>FUNCTION</scope>
    <scope>SYNTHESIS OF 22-95</scope>
</reference>
<name>3L2A_BUNCA</name>
<keyword id="KW-0008">Acetylcholine receptor inhibiting toxin</keyword>
<keyword id="KW-0903">Direct protein sequencing</keyword>
<keyword id="KW-1015">Disulfide bond</keyword>
<keyword id="KW-0872">Ion channel impairing toxin</keyword>
<keyword id="KW-0528">Neurotoxin</keyword>
<keyword id="KW-0629">Postsynaptic neurotoxin</keyword>
<keyword id="KW-0964">Secreted</keyword>
<keyword id="KW-0732">Signal</keyword>
<keyword id="KW-0800">Toxin</keyword>
<accession>Q7T3J2</accession>
<accession>Q8AY54</accession>
<proteinExistence type="evidence at protein level"/>
<organism>
    <name type="scientific">Bungarus candidus</name>
    <name type="common">Malayan krait</name>
    <dbReference type="NCBI Taxonomy" id="92438"/>
    <lineage>
        <taxon>Eukaryota</taxon>
        <taxon>Metazoa</taxon>
        <taxon>Chordata</taxon>
        <taxon>Craniata</taxon>
        <taxon>Vertebrata</taxon>
        <taxon>Euteleostomi</taxon>
        <taxon>Lepidosauria</taxon>
        <taxon>Squamata</taxon>
        <taxon>Bifurcata</taxon>
        <taxon>Unidentata</taxon>
        <taxon>Episquamata</taxon>
        <taxon>Toxicofera</taxon>
        <taxon>Serpentes</taxon>
        <taxon>Colubroidea</taxon>
        <taxon>Elapidae</taxon>
        <taxon>Bungarinae</taxon>
        <taxon>Bungarus</taxon>
    </lineage>
</organism>
<feature type="signal peptide" evidence="3">
    <location>
        <begin position="1"/>
        <end position="21"/>
    </location>
</feature>
<feature type="chain" id="PRO_0000035405" description="Alpha-bungarotoxin, isoform A31">
    <location>
        <begin position="22"/>
        <end position="95"/>
    </location>
</feature>
<feature type="disulfide bond" evidence="2">
    <location>
        <begin position="24"/>
        <end position="44"/>
    </location>
</feature>
<feature type="disulfide bond" evidence="2">
    <location>
        <begin position="37"/>
        <end position="65"/>
    </location>
</feature>
<feature type="disulfide bond" evidence="2">
    <location>
        <begin position="50"/>
        <end position="54"/>
    </location>
</feature>
<feature type="disulfide bond" evidence="2">
    <location>
        <begin position="69"/>
        <end position="80"/>
    </location>
</feature>
<feature type="disulfide bond" evidence="2">
    <location>
        <begin position="81"/>
        <end position="86"/>
    </location>
</feature>
<protein>
    <recommendedName>
        <fullName evidence="6">Alpha-bungarotoxin, isoform A31</fullName>
        <shortName evidence="5">Alpha-BgTx (A31)</shortName>
        <shortName evidence="4 5">Alpha-bungarotoxin (A31)</shortName>
    </recommendedName>
</protein>
<sequence length="95" mass="10285">MKTLLLTLVVVTIVCLDLGYTIVCHTTATSPISAVTCPPGENLCYRKMWCDAFCSSRGKVVELGCAATCPSKKPYEEVTCCSTDKCNPHPKQRPG</sequence>
<evidence type="ECO:0000250" key="1"/>
<evidence type="ECO:0000250" key="2">
    <source>
        <dbReference type="UniProtKB" id="P60615"/>
    </source>
</evidence>
<evidence type="ECO:0000269" key="3">
    <source>
    </source>
</evidence>
<evidence type="ECO:0000303" key="4">
    <source>
    </source>
</evidence>
<evidence type="ECO:0000303" key="5">
    <source>
    </source>
</evidence>
<evidence type="ECO:0000305" key="6"/>
<evidence type="ECO:0000305" key="7">
    <source>
    </source>
</evidence>
<comment type="function">
    <text evidence="2 3">Binds with high affinity to muscular (tested on Torpedo marmorata, Kd=0.4 nM) and neuronal (tested on chimeric alpha-7/CHRNA7, Kd=0.95 nM) nicotinic acetylcholine receptor (nAChR) and inhibits acetylcholine from binding to the receptor, thereby impairing neuromuscular and neuronal transmission. It also shows an activity on GABA(A) receptors. It antagonises GABA-activated currents with high potency when tested on primary hippocampal neurons. It inhibits recombinantly expressed GABA(A) receptors composed of alpha-2-beta-2-gamma-2 (GABRA2-GABRB2-GABRG2) subunits with high potency (62.3% inhibition at 20 uM of toxin). It also shows a weaker inhibition on GABA(A) receptors composed of alpha-1-beta-2-gamma-2 (GABRA1-GABRB2-GABRG2) subunits, alpha-4-beta-2-gamma-2 (GABRA4-GABRB2-GABRG2) subunits, and alpha-5-beta-2-gamma-2 (GABRA5-GABRB2-GABRG2) subunits. A very weak inhibition is also observed on GABA(A) receptor composed of alpha-1-beta-3-gamma-2 (GABRA1-GABRB3-GABRG2). It has also been shown to bind and inhibit recombinant GABA(A) receptor beta-3/GABRB3 subunit (Kd=about 50 nM). In addition, it blocks the extracellular increase of dopamine evoked by nicotine only at the higher dose (4.2 uM). In vivo, when intraperitoneally injected into mice, induces flaccid paralysis of the limbs and respiratory distress, and causes death in a dose-dependent manner (PubMed:14505938).</text>
</comment>
<comment type="subunit">
    <text evidence="1">Monomer in solution, homodimer in crystal state.</text>
</comment>
<comment type="subcellular location">
    <subcellularLocation>
        <location evidence="3">Secreted</location>
    </subcellularLocation>
</comment>
<comment type="tissue specificity">
    <text evidence="7">Expressed by the venom gland.</text>
</comment>
<comment type="mass spectrometry" mass="7983.75" method="Electrospray" evidence="3"/>
<comment type="toxic dose">
    <text evidence="3">LD(50) is 230 ug/kg by intraperitoneal injection into mice.</text>
</comment>
<comment type="miscellaneous">
    <text evidence="6">Is identical to Alpha-bungarotoxin (A31) from B.multicinctus (AC P60615).</text>
</comment>
<comment type="similarity">
    <text evidence="6">Belongs to the three-finger toxin family. Long-chain subfamily. Type II alpha-neurotoxin sub-subfamily.</text>
</comment>
<dbReference type="EMBL" id="AY057874">
    <property type="protein sequence ID" value="AAL30056.1"/>
    <property type="molecule type" value="mRNA"/>
</dbReference>
<dbReference type="EMBL" id="AJ565000">
    <property type="protein sequence ID" value="CAD92407.1"/>
    <property type="molecule type" value="Genomic_DNA"/>
</dbReference>
<dbReference type="BMRB" id="Q7T3J2"/>
<dbReference type="SMR" id="Q7T3J2"/>
<dbReference type="GO" id="GO:0005576">
    <property type="term" value="C:extracellular region"/>
    <property type="evidence" value="ECO:0007669"/>
    <property type="project" value="UniProtKB-SubCell"/>
</dbReference>
<dbReference type="GO" id="GO:0030550">
    <property type="term" value="F:acetylcholine receptor inhibitor activity"/>
    <property type="evidence" value="ECO:0007669"/>
    <property type="project" value="UniProtKB-KW"/>
</dbReference>
<dbReference type="GO" id="GO:0099106">
    <property type="term" value="F:ion channel regulator activity"/>
    <property type="evidence" value="ECO:0007669"/>
    <property type="project" value="UniProtKB-KW"/>
</dbReference>
<dbReference type="GO" id="GO:0090729">
    <property type="term" value="F:toxin activity"/>
    <property type="evidence" value="ECO:0007669"/>
    <property type="project" value="UniProtKB-KW"/>
</dbReference>
<dbReference type="CDD" id="cd00206">
    <property type="entry name" value="TFP_snake_toxin"/>
    <property type="match status" value="1"/>
</dbReference>
<dbReference type="Gene3D" id="2.10.60.10">
    <property type="entry name" value="CD59"/>
    <property type="match status" value="1"/>
</dbReference>
<dbReference type="InterPro" id="IPR003571">
    <property type="entry name" value="Snake_3FTx"/>
</dbReference>
<dbReference type="InterPro" id="IPR045860">
    <property type="entry name" value="Snake_toxin-like_sf"/>
</dbReference>
<dbReference type="InterPro" id="IPR018354">
    <property type="entry name" value="Snake_toxin_con_site"/>
</dbReference>
<dbReference type="InterPro" id="IPR054131">
    <property type="entry name" value="Toxin_cobra-type"/>
</dbReference>
<dbReference type="Pfam" id="PF21947">
    <property type="entry name" value="Toxin_cobra-type"/>
    <property type="match status" value="1"/>
</dbReference>
<dbReference type="SUPFAM" id="SSF57302">
    <property type="entry name" value="Snake toxin-like"/>
    <property type="match status" value="1"/>
</dbReference>
<dbReference type="PROSITE" id="PS00272">
    <property type="entry name" value="SNAKE_TOXIN"/>
    <property type="match status" value="1"/>
</dbReference>